<protein>
    <recommendedName>
        <fullName evidence="1">Alpha-1,4-glucan:maltose-1-phosphate maltosyltransferase</fullName>
        <shortName evidence="1">GMPMT</shortName>
        <ecNumber evidence="1">2.4.99.16</ecNumber>
    </recommendedName>
    <alternativeName>
        <fullName evidence="1">(1-&gt;4)-alpha-D-glucan:maltose-1-phosphate alpha-D-maltosyltransferase</fullName>
    </alternativeName>
</protein>
<proteinExistence type="inferred from homology"/>
<comment type="function">
    <text evidence="1">Maltosyltransferase that uses maltose 1-phosphate (M1P) as the sugar donor to elongate linear or branched alpha-(1-&gt;4)-glucans. Is involved in a branched alpha-glucan biosynthetic pathway from trehalose, together with TreS, Mak and GlgB.</text>
</comment>
<comment type="catalytic activity">
    <reaction evidence="1">
        <text>alpha-maltose 1-phosphate + [(1-&gt;4)-alpha-D-glucosyl](n) = [(1-&gt;4)-alpha-D-glucosyl](n+2) + phosphate</text>
        <dbReference type="Rhea" id="RHEA:42692"/>
        <dbReference type="Rhea" id="RHEA-COMP:9584"/>
        <dbReference type="Rhea" id="RHEA-COMP:10183"/>
        <dbReference type="ChEBI" id="CHEBI:15444"/>
        <dbReference type="ChEBI" id="CHEBI:43474"/>
        <dbReference type="ChEBI" id="CHEBI:63576"/>
        <dbReference type="EC" id="2.4.99.16"/>
    </reaction>
</comment>
<comment type="subunit">
    <text evidence="1">Homodimer.</text>
</comment>
<comment type="similarity">
    <text evidence="1">Belongs to the glycosyl hydrolase 13 family. GlgE subfamily.</text>
</comment>
<comment type="sequence caution" evidence="3">
    <conflict type="erroneous initiation">
        <sequence resource="EMBL-CDS" id="CAB87126"/>
    </conflict>
    <text>Extended N-terminus.</text>
</comment>
<dbReference type="EC" id="2.4.99.16" evidence="1"/>
<dbReference type="EMBL" id="X80205">
    <property type="protein sequence ID" value="CAB87126.1"/>
    <property type="status" value="ALT_INIT"/>
    <property type="molecule type" value="Genomic_DNA"/>
</dbReference>
<dbReference type="SMR" id="Q9JN46"/>
<dbReference type="GO" id="GO:0016757">
    <property type="term" value="F:glycosyltransferase activity"/>
    <property type="evidence" value="ECO:0007669"/>
    <property type="project" value="UniProtKB-KW"/>
</dbReference>
<dbReference type="GO" id="GO:0004553">
    <property type="term" value="F:hydrolase activity, hydrolyzing O-glycosyl compounds"/>
    <property type="evidence" value="ECO:0007669"/>
    <property type="project" value="InterPro"/>
</dbReference>
<dbReference type="GO" id="GO:0005975">
    <property type="term" value="P:carbohydrate metabolic process"/>
    <property type="evidence" value="ECO:0007669"/>
    <property type="project" value="InterPro"/>
</dbReference>
<dbReference type="CDD" id="cd11344">
    <property type="entry name" value="AmyAc_GlgE_like"/>
    <property type="match status" value="1"/>
</dbReference>
<dbReference type="Gene3D" id="3.20.20.80">
    <property type="entry name" value="Glycosidases"/>
    <property type="match status" value="1"/>
</dbReference>
<dbReference type="Gene3D" id="2.60.40.1180">
    <property type="entry name" value="Golgi alpha-mannosidase II"/>
    <property type="match status" value="1"/>
</dbReference>
<dbReference type="Gene3D" id="2.60.40.10">
    <property type="entry name" value="Immunoglobulins"/>
    <property type="match status" value="1"/>
</dbReference>
<dbReference type="Gene3D" id="1.20.58.80">
    <property type="entry name" value="Phosphotransferase system, lactose/cellobiose-type IIA subunit"/>
    <property type="match status" value="1"/>
</dbReference>
<dbReference type="HAMAP" id="MF_02124">
    <property type="entry name" value="GlgE"/>
    <property type="match status" value="1"/>
</dbReference>
<dbReference type="InterPro" id="IPR026585">
    <property type="entry name" value="GlgE"/>
</dbReference>
<dbReference type="InterPro" id="IPR021828">
    <property type="entry name" value="GlgE_dom_N/S"/>
</dbReference>
<dbReference type="InterPro" id="IPR006047">
    <property type="entry name" value="Glyco_hydro_13_cat_dom"/>
</dbReference>
<dbReference type="InterPro" id="IPR013780">
    <property type="entry name" value="Glyco_hydro_b"/>
</dbReference>
<dbReference type="InterPro" id="IPR017853">
    <property type="entry name" value="Glycoside_hydrolase_SF"/>
</dbReference>
<dbReference type="InterPro" id="IPR013783">
    <property type="entry name" value="Ig-like_fold"/>
</dbReference>
<dbReference type="PANTHER" id="PTHR47786">
    <property type="entry name" value="ALPHA-1,4-GLUCAN:MALTOSE-1-PHOSPHATE MALTOSYLTRANSFERASE"/>
    <property type="match status" value="1"/>
</dbReference>
<dbReference type="PANTHER" id="PTHR47786:SF2">
    <property type="entry name" value="GLYCOSYL HYDROLASE FAMILY 13 CATALYTIC DOMAIN-CONTAINING PROTEIN"/>
    <property type="match status" value="1"/>
</dbReference>
<dbReference type="Pfam" id="PF00128">
    <property type="entry name" value="Alpha-amylase"/>
    <property type="match status" value="1"/>
</dbReference>
<dbReference type="Pfam" id="PF11896">
    <property type="entry name" value="GlgE_dom_N_S"/>
    <property type="match status" value="1"/>
</dbReference>
<dbReference type="SMART" id="SM00642">
    <property type="entry name" value="Aamy"/>
    <property type="match status" value="1"/>
</dbReference>
<dbReference type="SUPFAM" id="SSF51445">
    <property type="entry name" value="(Trans)glycosidases"/>
    <property type="match status" value="1"/>
</dbReference>
<evidence type="ECO:0000255" key="1">
    <source>
        <dbReference type="HAMAP-Rule" id="MF_02124"/>
    </source>
</evidence>
<evidence type="ECO:0000256" key="2">
    <source>
        <dbReference type="SAM" id="MobiDB-lite"/>
    </source>
</evidence>
<evidence type="ECO:0000305" key="3"/>
<name>GLGE_CERSP</name>
<keyword id="KW-0119">Carbohydrate metabolism</keyword>
<keyword id="KW-0328">Glycosyltransferase</keyword>
<keyword id="KW-0808">Transferase</keyword>
<gene>
    <name evidence="1" type="primary">glgE</name>
    <name type="synonym">aam1</name>
</gene>
<accession>Q9JN46</accession>
<reference key="1">
    <citation type="journal article" date="2000" name="EMBO J.">
        <title>Fine tuning bacterial chemotaxis: analysis of Rhodobacter sphaeroides behaviour under aerobic and anaerobic conditions by mutation of the major chemotaxis operons and cheY genes.</title>
        <authorList>
            <person name="Shah D.S.H."/>
            <person name="Porter S.L."/>
            <person name="Martin A.C."/>
            <person name="Hamblin P.A."/>
            <person name="Armitage J.P."/>
        </authorList>
    </citation>
    <scope>NUCLEOTIDE SEQUENCE [GENOMIC DNA]</scope>
    <source>
        <strain>WS8N</strain>
    </source>
</reference>
<organism>
    <name type="scientific">Cereibacter sphaeroides</name>
    <name type="common">Rhodobacter sphaeroides</name>
    <dbReference type="NCBI Taxonomy" id="1063"/>
    <lineage>
        <taxon>Bacteria</taxon>
        <taxon>Pseudomonadati</taxon>
        <taxon>Pseudomonadota</taxon>
        <taxon>Alphaproteobacteria</taxon>
        <taxon>Rhodobacterales</taxon>
        <taxon>Paracoccaceae</taxon>
        <taxon>Cereibacter</taxon>
    </lineage>
</organism>
<feature type="chain" id="PRO_0000054351" description="Alpha-1,4-glucan:maltose-1-phosphate maltosyltransferase">
    <location>
        <begin position="1"/>
        <end position="594" status="greater than"/>
    </location>
</feature>
<feature type="region of interest" description="Disordered" evidence="2">
    <location>
        <begin position="244"/>
        <end position="270"/>
    </location>
</feature>
<feature type="active site" description="Nucleophile" evidence="1">
    <location>
        <position position="377"/>
    </location>
</feature>
<feature type="active site" description="Proton donor" evidence="1">
    <location>
        <position position="406"/>
    </location>
</feature>
<feature type="binding site" evidence="1">
    <location>
        <position position="246"/>
    </location>
    <ligand>
        <name>alpha-maltose 1-phosphate</name>
        <dbReference type="ChEBI" id="CHEBI:63576"/>
    </ligand>
</feature>
<feature type="binding site" evidence="1">
    <location>
        <position position="306"/>
    </location>
    <ligand>
        <name>alpha-maltose 1-phosphate</name>
        <dbReference type="ChEBI" id="CHEBI:63576"/>
    </ligand>
</feature>
<feature type="binding site" evidence="1">
    <location>
        <position position="341"/>
    </location>
    <ligand>
        <name>alpha-maltose 1-phosphate</name>
        <dbReference type="ChEBI" id="CHEBI:63576"/>
    </ligand>
</feature>
<feature type="binding site" evidence="1">
    <location>
        <position position="378"/>
    </location>
    <ligand>
        <name>alpha-maltose 1-phosphate</name>
        <dbReference type="ChEBI" id="CHEBI:63576"/>
    </ligand>
</feature>
<feature type="binding site" evidence="1">
    <location>
        <begin position="517"/>
        <end position="518"/>
    </location>
    <ligand>
        <name>alpha-maltose 1-phosphate</name>
        <dbReference type="ChEBI" id="CHEBI:63576"/>
    </ligand>
</feature>
<feature type="site" description="Transition state stabilizer" evidence="1">
    <location>
        <position position="464"/>
    </location>
</feature>
<feature type="non-terminal residue">
    <location>
        <position position="594"/>
    </location>
</feature>
<sequence length="594" mass="68156">MRLADARVAIEGVNLEIDGGRFAAKVVAGWEVAVEADIFCDGHDSIDAAVLHRQRGTDDWTEVRMEFLVNDRWQARVTFAENAFHELTFLAWRDLYTTWRKEVAKKLAAGQKIDLELEEGRRLLQSVETAGAEDRALVDRILGEDGADQEAGARFARMSSPEAVAAMKRCAPRTNLTCYKILPIFADREAAAFSAWYEMMPRSQSGDPERHGTFDDVIRKLPYVRDLGFDVLYFTPIHPIGRVNRKGRNNSLTPGPDDPGSPYAIGSEEGGHDAIHPELGDFESFGRLVEAAHAHGLEVALDFAIQCAPDHPWIREHPEWFDWRPDGTIKFAENPPKKYEDIVNVHFYRGALPELWYALRDVVLFWVEKGVKIFRVDNPHTKPFPFWEWMIGEVQSQHPDVIFLAEAFTRPKVMKRLGKVGYGQSYSYFTWRNTKAELIDYLTELTTEECRHYMRPNFFANTPDINPVYLQHSGRAGFRVRLALAATLGGNYGLYNGYEICEATPVPGKEEYFNSEKYQLRAWDFDQPGHIQDDIRLMNHIRRTHPAMRDFTRLRFYDAHNDSVLAYGKSTEDKQDFLLFHVNLDPHAAQTFEF</sequence>